<keyword id="KW-0028">Amino-acid biosynthesis</keyword>
<keyword id="KW-0963">Cytoplasm</keyword>
<keyword id="KW-0368">Histidine biosynthesis</keyword>
<keyword id="KW-0413">Isomerase</keyword>
<proteinExistence type="inferred from homology"/>
<feature type="chain" id="PRO_0000290484" description="1-(5-phosphoribosyl)-5-[(5-phosphoribosylamino)methylideneamino] imidazole-4-carboxamide isomerase">
    <location>
        <begin position="1"/>
        <end position="246"/>
    </location>
</feature>
<feature type="active site" description="Proton acceptor" evidence="1">
    <location>
        <position position="8"/>
    </location>
</feature>
<feature type="active site" description="Proton donor" evidence="1">
    <location>
        <position position="131"/>
    </location>
</feature>
<protein>
    <recommendedName>
        <fullName evidence="1">1-(5-phosphoribosyl)-5-[(5-phosphoribosylamino)methylideneamino] imidazole-4-carboxamide isomerase</fullName>
        <ecNumber evidence="1">5.3.1.16</ecNumber>
    </recommendedName>
    <alternativeName>
        <fullName evidence="1">Phosphoribosylformimino-5-aminoimidazole carboxamide ribotide isomerase</fullName>
    </alternativeName>
</protein>
<name>HIS4_LACLM</name>
<reference key="1">
    <citation type="journal article" date="2007" name="J. Bacteriol.">
        <title>The complete genome sequence of the lactic acid bacterial paradigm Lactococcus lactis subsp. cremoris MG1363.</title>
        <authorList>
            <person name="Wegmann U."/>
            <person name="O'Connell-Motherway M."/>
            <person name="Zomer A."/>
            <person name="Buist G."/>
            <person name="Shearman C."/>
            <person name="Canchaya C."/>
            <person name="Ventura M."/>
            <person name="Goesmann A."/>
            <person name="Gasson M.J."/>
            <person name="Kuipers O.P."/>
            <person name="van Sinderen D."/>
            <person name="Kok J."/>
        </authorList>
    </citation>
    <scope>NUCLEOTIDE SEQUENCE [LARGE SCALE GENOMIC DNA]</scope>
    <source>
        <strain>MG1363</strain>
    </source>
</reference>
<gene>
    <name evidence="1" type="primary">hisA</name>
    <name type="ordered locus">llmg_1291</name>
</gene>
<dbReference type="EC" id="5.3.1.16" evidence="1"/>
<dbReference type="EMBL" id="AM406671">
    <property type="protein sequence ID" value="CAL97884.1"/>
    <property type="molecule type" value="Genomic_DNA"/>
</dbReference>
<dbReference type="RefSeq" id="WP_011835168.1">
    <property type="nucleotide sequence ID" value="NC_009004.1"/>
</dbReference>
<dbReference type="SMR" id="A2RKR8"/>
<dbReference type="STRING" id="416870.llmg_1291"/>
<dbReference type="KEGG" id="llm:llmg_1291"/>
<dbReference type="eggNOG" id="COG0106">
    <property type="taxonomic scope" value="Bacteria"/>
</dbReference>
<dbReference type="HOGENOM" id="CLU_048577_1_2_9"/>
<dbReference type="OrthoDB" id="9807749at2"/>
<dbReference type="PhylomeDB" id="A2RKR8"/>
<dbReference type="UniPathway" id="UPA00031">
    <property type="reaction ID" value="UER00009"/>
</dbReference>
<dbReference type="Proteomes" id="UP000000364">
    <property type="component" value="Chromosome"/>
</dbReference>
<dbReference type="GO" id="GO:0005737">
    <property type="term" value="C:cytoplasm"/>
    <property type="evidence" value="ECO:0007669"/>
    <property type="project" value="UniProtKB-SubCell"/>
</dbReference>
<dbReference type="GO" id="GO:0003949">
    <property type="term" value="F:1-(5-phosphoribosyl)-5-[(5-phosphoribosylamino)methylideneamino]imidazole-4-carboxamide isomerase activity"/>
    <property type="evidence" value="ECO:0007669"/>
    <property type="project" value="UniProtKB-UniRule"/>
</dbReference>
<dbReference type="GO" id="GO:0000105">
    <property type="term" value="P:L-histidine biosynthetic process"/>
    <property type="evidence" value="ECO:0007669"/>
    <property type="project" value="UniProtKB-UniRule"/>
</dbReference>
<dbReference type="GO" id="GO:0000162">
    <property type="term" value="P:L-tryptophan biosynthetic process"/>
    <property type="evidence" value="ECO:0007669"/>
    <property type="project" value="TreeGrafter"/>
</dbReference>
<dbReference type="CDD" id="cd04732">
    <property type="entry name" value="HisA"/>
    <property type="match status" value="1"/>
</dbReference>
<dbReference type="FunFam" id="3.20.20.70:FF:000009">
    <property type="entry name" value="1-(5-phosphoribosyl)-5-[(5-phosphoribosylamino)methylideneamino] imidazole-4-carboxamide isomerase"/>
    <property type="match status" value="1"/>
</dbReference>
<dbReference type="Gene3D" id="3.20.20.70">
    <property type="entry name" value="Aldolase class I"/>
    <property type="match status" value="1"/>
</dbReference>
<dbReference type="HAMAP" id="MF_01014">
    <property type="entry name" value="HisA"/>
    <property type="match status" value="1"/>
</dbReference>
<dbReference type="InterPro" id="IPR013785">
    <property type="entry name" value="Aldolase_TIM"/>
</dbReference>
<dbReference type="InterPro" id="IPR006062">
    <property type="entry name" value="His_biosynth"/>
</dbReference>
<dbReference type="InterPro" id="IPR006063">
    <property type="entry name" value="HisA_bact_arch"/>
</dbReference>
<dbReference type="InterPro" id="IPR044524">
    <property type="entry name" value="Isoase_HisA-like"/>
</dbReference>
<dbReference type="InterPro" id="IPR023016">
    <property type="entry name" value="Isoase_HisA-like_bact"/>
</dbReference>
<dbReference type="InterPro" id="IPR011060">
    <property type="entry name" value="RibuloseP-bd_barrel"/>
</dbReference>
<dbReference type="NCBIfam" id="TIGR00007">
    <property type="entry name" value="1-(5-phosphoribosyl)-5-[(5-phosphoribosylamino)methylideneamino]imidazole-4-carboxamide isomerase"/>
    <property type="match status" value="1"/>
</dbReference>
<dbReference type="PANTHER" id="PTHR43090">
    <property type="entry name" value="1-(5-PHOSPHORIBOSYL)-5-[(5-PHOSPHORIBOSYLAMINO)METHYLIDENEAMINO] IMIDAZOLE-4-CARBOXAMIDE ISOMERASE"/>
    <property type="match status" value="1"/>
</dbReference>
<dbReference type="PANTHER" id="PTHR43090:SF2">
    <property type="entry name" value="1-(5-PHOSPHORIBOSYL)-5-[(5-PHOSPHORIBOSYLAMINO)METHYLIDENEAMINO] IMIDAZOLE-4-CARBOXAMIDE ISOMERASE"/>
    <property type="match status" value="1"/>
</dbReference>
<dbReference type="Pfam" id="PF00977">
    <property type="entry name" value="His_biosynth"/>
    <property type="match status" value="1"/>
</dbReference>
<dbReference type="SUPFAM" id="SSF51366">
    <property type="entry name" value="Ribulose-phoshate binding barrel"/>
    <property type="match status" value="1"/>
</dbReference>
<sequence>MEIIPAIDLQNGEAVRLYKGDYDKKTVYSKNPLEIAQKFEQMEAKYLHLVDLDGAKLGQTRNLEIVRKIKDQTNLKIEIGGGIRNLDTVSLYLEQIGVERVILGTAAAEKPDFLKELLVKYGLSRIVVGVDIREGFVSTSGWLEKTTLPYLSFLKDLEKIGVKTVIVTDISKDGTLTGPNFELYDEISKETSLDVIVSGGVKDSSDIQRAADSDFYGIIVGKAYYEGKINLEKEFNHANKKNYPLS</sequence>
<accession>A2RKR8</accession>
<evidence type="ECO:0000255" key="1">
    <source>
        <dbReference type="HAMAP-Rule" id="MF_01014"/>
    </source>
</evidence>
<comment type="catalytic activity">
    <reaction evidence="1">
        <text>1-(5-phospho-beta-D-ribosyl)-5-[(5-phospho-beta-D-ribosylamino)methylideneamino]imidazole-4-carboxamide = 5-[(5-phospho-1-deoxy-D-ribulos-1-ylimino)methylamino]-1-(5-phospho-beta-D-ribosyl)imidazole-4-carboxamide</text>
        <dbReference type="Rhea" id="RHEA:15469"/>
        <dbReference type="ChEBI" id="CHEBI:58435"/>
        <dbReference type="ChEBI" id="CHEBI:58525"/>
        <dbReference type="EC" id="5.3.1.16"/>
    </reaction>
</comment>
<comment type="pathway">
    <text evidence="1">Amino-acid biosynthesis; L-histidine biosynthesis; L-histidine from 5-phospho-alpha-D-ribose 1-diphosphate: step 4/9.</text>
</comment>
<comment type="subcellular location">
    <subcellularLocation>
        <location evidence="1">Cytoplasm</location>
    </subcellularLocation>
</comment>
<comment type="similarity">
    <text evidence="1">Belongs to the HisA/HisF family.</text>
</comment>
<organism>
    <name type="scientific">Lactococcus lactis subsp. cremoris (strain MG1363)</name>
    <dbReference type="NCBI Taxonomy" id="416870"/>
    <lineage>
        <taxon>Bacteria</taxon>
        <taxon>Bacillati</taxon>
        <taxon>Bacillota</taxon>
        <taxon>Bacilli</taxon>
        <taxon>Lactobacillales</taxon>
        <taxon>Streptococcaceae</taxon>
        <taxon>Lactococcus</taxon>
        <taxon>Lactococcus cremoris subsp. cremoris</taxon>
    </lineage>
</organism>